<feature type="chain" id="PRO_0000048980" description="Homeobox protein Hmx">
    <location>
        <begin position="1"/>
        <end position="405" status="greater than"/>
    </location>
</feature>
<feature type="DNA-binding region" description="Homeobox" evidence="1">
    <location>
        <begin position="253"/>
        <end position="312"/>
    </location>
</feature>
<feature type="region of interest" description="Disordered" evidence="2">
    <location>
        <begin position="1"/>
        <end position="118"/>
    </location>
</feature>
<feature type="region of interest" description="Disordered" evidence="2">
    <location>
        <begin position="201"/>
        <end position="259"/>
    </location>
</feature>
<feature type="region of interest" description="Disordered" evidence="2">
    <location>
        <begin position="383"/>
        <end position="405"/>
    </location>
</feature>
<feature type="compositionally biased region" description="Basic and acidic residues" evidence="2">
    <location>
        <begin position="1"/>
        <end position="32"/>
    </location>
</feature>
<feature type="compositionally biased region" description="Basic and acidic residues" evidence="2">
    <location>
        <begin position="216"/>
        <end position="237"/>
    </location>
</feature>
<feature type="compositionally biased region" description="Acidic residues" evidence="2">
    <location>
        <begin position="238"/>
        <end position="247"/>
    </location>
</feature>
<feature type="compositionally biased region" description="Low complexity" evidence="2">
    <location>
        <begin position="386"/>
        <end position="405"/>
    </location>
</feature>
<feature type="non-terminal residue">
    <location>
        <position position="405"/>
    </location>
</feature>
<name>HMX_STRPU</name>
<organism>
    <name type="scientific">Strongylocentrotus purpuratus</name>
    <name type="common">Purple sea urchin</name>
    <dbReference type="NCBI Taxonomy" id="7668"/>
    <lineage>
        <taxon>Eukaryota</taxon>
        <taxon>Metazoa</taxon>
        <taxon>Echinodermata</taxon>
        <taxon>Eleutherozoa</taxon>
        <taxon>Echinozoa</taxon>
        <taxon>Echinoidea</taxon>
        <taxon>Euechinoidea</taxon>
        <taxon>Echinacea</taxon>
        <taxon>Camarodonta</taxon>
        <taxon>Echinidea</taxon>
        <taxon>Strongylocentrotidae</taxon>
        <taxon>Strongylocentrotus</taxon>
    </lineage>
</organism>
<keyword id="KW-0217">Developmental protein</keyword>
<keyword id="KW-0238">DNA-binding</keyword>
<keyword id="KW-0371">Homeobox</keyword>
<keyword id="KW-0539">Nucleus</keyword>
<keyword id="KW-1185">Reference proteome</keyword>
<keyword id="KW-0804">Transcription</keyword>
<keyword id="KW-0805">Transcription regulation</keyword>
<proteinExistence type="evidence at transcript level"/>
<protein>
    <recommendedName>
        <fullName>Homeobox protein Hmx</fullName>
        <shortName>SpHmx</shortName>
    </recommendedName>
    <alternativeName>
        <fullName>H6-like</fullName>
    </alternativeName>
</protein>
<dbReference type="EMBL" id="D85079">
    <property type="protein sequence ID" value="BAA12721.1"/>
    <property type="molecule type" value="mRNA"/>
</dbReference>
<dbReference type="RefSeq" id="NP_999726.1">
    <property type="nucleotide sequence ID" value="NM_214561.2"/>
</dbReference>
<dbReference type="SMR" id="Q26656"/>
<dbReference type="STRING" id="7668.Q26656"/>
<dbReference type="EnsemblMetazoa" id="NM_214561">
    <property type="protein sequence ID" value="NP_999726"/>
    <property type="gene ID" value="GeneID_373358"/>
</dbReference>
<dbReference type="GeneID" id="373358"/>
<dbReference type="KEGG" id="spu:373358"/>
<dbReference type="CTD" id="42110"/>
<dbReference type="HOGENOM" id="CLU_1543934_0_0_1"/>
<dbReference type="InParanoid" id="Q26656"/>
<dbReference type="OMA" id="WGRNGIG"/>
<dbReference type="OrthoDB" id="6159439at2759"/>
<dbReference type="PhylomeDB" id="Q26656"/>
<dbReference type="Proteomes" id="UP000007110">
    <property type="component" value="Unassembled WGS sequence"/>
</dbReference>
<dbReference type="GO" id="GO:0005634">
    <property type="term" value="C:nucleus"/>
    <property type="evidence" value="ECO:0000318"/>
    <property type="project" value="GO_Central"/>
</dbReference>
<dbReference type="GO" id="GO:0000981">
    <property type="term" value="F:DNA-binding transcription factor activity, RNA polymerase II-specific"/>
    <property type="evidence" value="ECO:0000318"/>
    <property type="project" value="GO_Central"/>
</dbReference>
<dbReference type="GO" id="GO:0000977">
    <property type="term" value="F:RNA polymerase II transcription regulatory region sequence-specific DNA binding"/>
    <property type="evidence" value="ECO:0000318"/>
    <property type="project" value="GO_Central"/>
</dbReference>
<dbReference type="GO" id="GO:0006357">
    <property type="term" value="P:regulation of transcription by RNA polymerase II"/>
    <property type="evidence" value="ECO:0000318"/>
    <property type="project" value="GO_Central"/>
</dbReference>
<dbReference type="CDD" id="cd00086">
    <property type="entry name" value="homeodomain"/>
    <property type="match status" value="1"/>
</dbReference>
<dbReference type="FunFam" id="1.10.10.60:FF:000053">
    <property type="entry name" value="H6 family homeobox 2"/>
    <property type="match status" value="1"/>
</dbReference>
<dbReference type="Gene3D" id="1.10.10.60">
    <property type="entry name" value="Homeodomain-like"/>
    <property type="match status" value="1"/>
</dbReference>
<dbReference type="InterPro" id="IPR001356">
    <property type="entry name" value="HD"/>
</dbReference>
<dbReference type="InterPro" id="IPR020479">
    <property type="entry name" value="HD_metazoa"/>
</dbReference>
<dbReference type="InterPro" id="IPR051300">
    <property type="entry name" value="HMX_Homeobox_TF"/>
</dbReference>
<dbReference type="InterPro" id="IPR017970">
    <property type="entry name" value="Homeobox_CS"/>
</dbReference>
<dbReference type="InterPro" id="IPR009057">
    <property type="entry name" value="Homeodomain-like_sf"/>
</dbReference>
<dbReference type="PANTHER" id="PTHR46110">
    <property type="entry name" value="HOMEOBOX PROTEIN HMX"/>
    <property type="match status" value="1"/>
</dbReference>
<dbReference type="PANTHER" id="PTHR46110:SF3">
    <property type="entry name" value="HOMEOBOX PROTEIN HMX"/>
    <property type="match status" value="1"/>
</dbReference>
<dbReference type="Pfam" id="PF00046">
    <property type="entry name" value="Homeodomain"/>
    <property type="match status" value="1"/>
</dbReference>
<dbReference type="PRINTS" id="PR00024">
    <property type="entry name" value="HOMEOBOX"/>
</dbReference>
<dbReference type="SMART" id="SM00389">
    <property type="entry name" value="HOX"/>
    <property type="match status" value="1"/>
</dbReference>
<dbReference type="SUPFAM" id="SSF46689">
    <property type="entry name" value="Homeodomain-like"/>
    <property type="match status" value="1"/>
</dbReference>
<dbReference type="PROSITE" id="PS00027">
    <property type="entry name" value="HOMEOBOX_1"/>
    <property type="match status" value="1"/>
</dbReference>
<dbReference type="PROSITE" id="PS50071">
    <property type="entry name" value="HOMEOBOX_2"/>
    <property type="match status" value="1"/>
</dbReference>
<evidence type="ECO:0000255" key="1">
    <source>
        <dbReference type="PROSITE-ProRule" id="PRU00108"/>
    </source>
</evidence>
<evidence type="ECO:0000256" key="2">
    <source>
        <dbReference type="SAM" id="MobiDB-lite"/>
    </source>
</evidence>
<evidence type="ECO:0000305" key="3"/>
<sequence>MDSSRELSGEEPRSPSPRHETSKMRLSPDRPSHHPARPPASLASQPLRPAHYQDDDDSYRTHTPPPSQPRTKGFSIESILSPTDKHRKSPRSPPMSPSSPSMSSNGYSEGPIYGSTRHPLSATVPGLGRAALDELAAHRAAALHIPSAALPFSHLAHNPAFYAWMHGASFLHYHGMPAFNSHPPIAQPLTNSSRLAMAKDISPRPTQSHSSFGEEGGEKDSRGRESPDSEHRRNNGHEEDDDDDDDQSPQKKKKKTRTVFSRSQVFQLESTFEVKRYLSSSERAGLAANLHLTETQVKIWFQNRRNKWKRQMAAELESANLAHAAQIRAQANLAQVSAVHVHAYAQRMVRVPILYHENHPTTGSSLHSPNILPFPMPYPGSYHQISSSTSSTSSARSPTSTSIVT</sequence>
<accession>Q26656</accession>
<reference key="1">
    <citation type="journal article" date="1997" name="Dev. Biol.">
        <title>SpHmx, a sea urchin homeobox gene expressed in embryonic pigment cells.</title>
        <authorList>
            <person name="Martinez P."/>
            <person name="Davidson E.H."/>
        </authorList>
    </citation>
    <scope>NUCLEOTIDE SEQUENCE [MRNA]</scope>
    <source>
        <tissue>Embryo</tissue>
    </source>
</reference>
<gene>
    <name type="primary">HMX</name>
</gene>
<comment type="function">
    <text>May be a cell-type-specific regulator of pigment cell differentiation.</text>
</comment>
<comment type="subcellular location">
    <subcellularLocation>
        <location evidence="1">Nucleus</location>
    </subcellularLocation>
</comment>
<comment type="tissue specificity">
    <text>Developing pigment cells. Also maternally expressed in oocytes.</text>
</comment>
<comment type="developmental stage">
    <text>Expressed in mid-gastrula stages throughout the archenteron and in delaminating secondary mesenchyme cells. At later stages (prism and pluteus) expression is seen exclusively in pigment cells.</text>
</comment>
<comment type="similarity">
    <text evidence="3">Belongs to the HMX homeobox family.</text>
</comment>